<reference key="1">
    <citation type="journal article" date="2005" name="Genome Res.">
        <title>Living with two extremes: conclusions from the genome sequence of Natronomonas pharaonis.</title>
        <authorList>
            <person name="Falb M."/>
            <person name="Pfeiffer F."/>
            <person name="Palm P."/>
            <person name="Rodewald K."/>
            <person name="Hickmann V."/>
            <person name="Tittor J."/>
            <person name="Oesterhelt D."/>
        </authorList>
    </citation>
    <scope>NUCLEOTIDE SEQUENCE [LARGE SCALE GENOMIC DNA]</scope>
    <source>
        <strain>ATCC 35678 / DSM 2160 / CIP 103997 / JCM 8858 / NBRC 14720 / NCIMB 2260 / Gabara</strain>
    </source>
</reference>
<gene>
    <name evidence="1" type="primary">cheB</name>
    <name type="ordered locus">NP_2174A</name>
</gene>
<keyword id="KW-0145">Chemotaxis</keyword>
<keyword id="KW-0963">Cytoplasm</keyword>
<keyword id="KW-0378">Hydrolase</keyword>
<keyword id="KW-0597">Phosphoprotein</keyword>
<keyword id="KW-1185">Reference proteome</keyword>
<organism>
    <name type="scientific">Natronomonas pharaonis (strain ATCC 35678 / DSM 2160 / CIP 103997 / JCM 8858 / NBRC 14720 / NCIMB 2260 / Gabara)</name>
    <name type="common">Halobacterium pharaonis</name>
    <dbReference type="NCBI Taxonomy" id="348780"/>
    <lineage>
        <taxon>Archaea</taxon>
        <taxon>Methanobacteriati</taxon>
        <taxon>Methanobacteriota</taxon>
        <taxon>Stenosarchaea group</taxon>
        <taxon>Halobacteria</taxon>
        <taxon>Halobacteriales</taxon>
        <taxon>Haloarculaceae</taxon>
        <taxon>Natronomonas</taxon>
    </lineage>
</organism>
<feature type="chain" id="PRO_0000225498" description="Protein-glutamate methylesterase/protein-glutamine glutaminase">
    <location>
        <begin position="1"/>
        <end position="355"/>
    </location>
</feature>
<feature type="domain" description="Response regulatory" evidence="1">
    <location>
        <begin position="7"/>
        <end position="123"/>
    </location>
</feature>
<feature type="domain" description="CheB-type methylesterase" evidence="1">
    <location>
        <begin position="161"/>
        <end position="355"/>
    </location>
</feature>
<feature type="region of interest" description="Disordered" evidence="2">
    <location>
        <begin position="139"/>
        <end position="159"/>
    </location>
</feature>
<feature type="active site" evidence="1">
    <location>
        <position position="173"/>
    </location>
</feature>
<feature type="active site" evidence="1">
    <location>
        <position position="200"/>
    </location>
</feature>
<feature type="active site" evidence="1">
    <location>
        <position position="297"/>
    </location>
</feature>
<feature type="modified residue" description="4-aspartylphosphate" evidence="1">
    <location>
        <position position="57"/>
    </location>
</feature>
<evidence type="ECO:0000255" key="1">
    <source>
        <dbReference type="HAMAP-Rule" id="MF_00099"/>
    </source>
</evidence>
<evidence type="ECO:0000256" key="2">
    <source>
        <dbReference type="SAM" id="MobiDB-lite"/>
    </source>
</evidence>
<protein>
    <recommendedName>
        <fullName evidence="1">Protein-glutamate methylesterase/protein-glutamine glutaminase</fullName>
        <ecNumber evidence="1">3.1.1.61</ecNumber>
        <ecNumber evidence="1">3.5.1.44</ecNumber>
    </recommendedName>
</protein>
<accession>Q3IRR4</accession>
<comment type="function">
    <text evidence="1">Involved in chemotaxis. Part of a chemotaxis signal transduction system that modulates chemotaxis in response to various stimuli. Catalyzes the demethylation of specific methylglutamate residues introduced into the chemoreceptors (methyl-accepting chemotaxis proteins or MCP) by CheR. Also mediates the irreversible deamidation of specific glutamine residues to glutamic acid.</text>
</comment>
<comment type="catalytic activity">
    <reaction evidence="1">
        <text>[protein]-L-glutamate 5-O-methyl ester + H2O = L-glutamyl-[protein] + methanol + H(+)</text>
        <dbReference type="Rhea" id="RHEA:23236"/>
        <dbReference type="Rhea" id="RHEA-COMP:10208"/>
        <dbReference type="Rhea" id="RHEA-COMP:10311"/>
        <dbReference type="ChEBI" id="CHEBI:15377"/>
        <dbReference type="ChEBI" id="CHEBI:15378"/>
        <dbReference type="ChEBI" id="CHEBI:17790"/>
        <dbReference type="ChEBI" id="CHEBI:29973"/>
        <dbReference type="ChEBI" id="CHEBI:82795"/>
        <dbReference type="EC" id="3.1.1.61"/>
    </reaction>
</comment>
<comment type="catalytic activity">
    <reaction evidence="1">
        <text>L-glutaminyl-[protein] + H2O = L-glutamyl-[protein] + NH4(+)</text>
        <dbReference type="Rhea" id="RHEA:16441"/>
        <dbReference type="Rhea" id="RHEA-COMP:10207"/>
        <dbReference type="Rhea" id="RHEA-COMP:10208"/>
        <dbReference type="ChEBI" id="CHEBI:15377"/>
        <dbReference type="ChEBI" id="CHEBI:28938"/>
        <dbReference type="ChEBI" id="CHEBI:29973"/>
        <dbReference type="ChEBI" id="CHEBI:30011"/>
        <dbReference type="EC" id="3.5.1.44"/>
    </reaction>
</comment>
<comment type="subcellular location">
    <subcellularLocation>
        <location evidence="1">Cytoplasm</location>
    </subcellularLocation>
</comment>
<comment type="domain">
    <text evidence="1">Contains a C-terminal catalytic domain, and an N-terminal region which modulates catalytic activity.</text>
</comment>
<comment type="PTM">
    <text evidence="1">Phosphorylated by CheA. Phosphorylation of the N-terminal regulatory domain activates the methylesterase activity.</text>
</comment>
<comment type="similarity">
    <text evidence="1">Belongs to the CheB family.</text>
</comment>
<dbReference type="EC" id="3.1.1.61" evidence="1"/>
<dbReference type="EC" id="3.5.1.44" evidence="1"/>
<dbReference type="EMBL" id="CR936257">
    <property type="protein sequence ID" value="CAI49178.1"/>
    <property type="molecule type" value="Genomic_DNA"/>
</dbReference>
<dbReference type="RefSeq" id="WP_011322806.1">
    <property type="nucleotide sequence ID" value="NC_007426.1"/>
</dbReference>
<dbReference type="SMR" id="Q3IRR4"/>
<dbReference type="STRING" id="348780.NP_2174A"/>
<dbReference type="EnsemblBacteria" id="CAI49178">
    <property type="protein sequence ID" value="CAI49178"/>
    <property type="gene ID" value="NP_2174A"/>
</dbReference>
<dbReference type="GeneID" id="3702598"/>
<dbReference type="KEGG" id="nph:NP_2174A"/>
<dbReference type="eggNOG" id="arCOG02382">
    <property type="taxonomic scope" value="Archaea"/>
</dbReference>
<dbReference type="HOGENOM" id="CLU_000445_51_0_2"/>
<dbReference type="OrthoDB" id="2857at2157"/>
<dbReference type="Proteomes" id="UP000002698">
    <property type="component" value="Chromosome"/>
</dbReference>
<dbReference type="GO" id="GO:0005737">
    <property type="term" value="C:cytoplasm"/>
    <property type="evidence" value="ECO:0007669"/>
    <property type="project" value="UniProtKB-SubCell"/>
</dbReference>
<dbReference type="GO" id="GO:0000156">
    <property type="term" value="F:phosphorelay response regulator activity"/>
    <property type="evidence" value="ECO:0007669"/>
    <property type="project" value="InterPro"/>
</dbReference>
<dbReference type="GO" id="GO:0008984">
    <property type="term" value="F:protein-glutamate methylesterase activity"/>
    <property type="evidence" value="ECO:0007669"/>
    <property type="project" value="UniProtKB-UniRule"/>
</dbReference>
<dbReference type="GO" id="GO:0050568">
    <property type="term" value="F:protein-glutamine glutaminase activity"/>
    <property type="evidence" value="ECO:0007669"/>
    <property type="project" value="UniProtKB-UniRule"/>
</dbReference>
<dbReference type="GO" id="GO:0006935">
    <property type="term" value="P:chemotaxis"/>
    <property type="evidence" value="ECO:0007669"/>
    <property type="project" value="UniProtKB-UniRule"/>
</dbReference>
<dbReference type="CDD" id="cd16432">
    <property type="entry name" value="CheB_Rec"/>
    <property type="match status" value="1"/>
</dbReference>
<dbReference type="CDD" id="cd17541">
    <property type="entry name" value="REC_CheB-like"/>
    <property type="match status" value="1"/>
</dbReference>
<dbReference type="Gene3D" id="3.40.50.2300">
    <property type="match status" value="1"/>
</dbReference>
<dbReference type="Gene3D" id="3.40.50.180">
    <property type="entry name" value="Methylesterase CheB, C-terminal domain"/>
    <property type="match status" value="1"/>
</dbReference>
<dbReference type="HAMAP" id="MF_00099">
    <property type="entry name" value="CheB_chemtxs"/>
    <property type="match status" value="1"/>
</dbReference>
<dbReference type="InterPro" id="IPR008248">
    <property type="entry name" value="CheB-like"/>
</dbReference>
<dbReference type="InterPro" id="IPR035909">
    <property type="entry name" value="CheB_C"/>
</dbReference>
<dbReference type="InterPro" id="IPR011006">
    <property type="entry name" value="CheY-like_superfamily"/>
</dbReference>
<dbReference type="InterPro" id="IPR000673">
    <property type="entry name" value="Sig_transdc_resp-reg_Me-estase"/>
</dbReference>
<dbReference type="InterPro" id="IPR001789">
    <property type="entry name" value="Sig_transdc_resp-reg_receiver"/>
</dbReference>
<dbReference type="NCBIfam" id="NF001965">
    <property type="entry name" value="PRK00742.1"/>
    <property type="match status" value="1"/>
</dbReference>
<dbReference type="PANTHER" id="PTHR42872">
    <property type="entry name" value="PROTEIN-GLUTAMATE METHYLESTERASE/PROTEIN-GLUTAMINE GLUTAMINASE"/>
    <property type="match status" value="1"/>
</dbReference>
<dbReference type="PANTHER" id="PTHR42872:SF6">
    <property type="entry name" value="PROTEIN-GLUTAMATE METHYLESTERASE_PROTEIN-GLUTAMINE GLUTAMINASE"/>
    <property type="match status" value="1"/>
</dbReference>
<dbReference type="Pfam" id="PF01339">
    <property type="entry name" value="CheB_methylest"/>
    <property type="match status" value="1"/>
</dbReference>
<dbReference type="Pfam" id="PF00072">
    <property type="entry name" value="Response_reg"/>
    <property type="match status" value="1"/>
</dbReference>
<dbReference type="PIRSF" id="PIRSF000876">
    <property type="entry name" value="RR_chemtxs_CheB"/>
    <property type="match status" value="1"/>
</dbReference>
<dbReference type="SMART" id="SM00448">
    <property type="entry name" value="REC"/>
    <property type="match status" value="1"/>
</dbReference>
<dbReference type="SUPFAM" id="SSF52172">
    <property type="entry name" value="CheY-like"/>
    <property type="match status" value="1"/>
</dbReference>
<dbReference type="SUPFAM" id="SSF52738">
    <property type="entry name" value="Methylesterase CheB, C-terminal domain"/>
    <property type="match status" value="1"/>
</dbReference>
<dbReference type="PROSITE" id="PS50122">
    <property type="entry name" value="CHEB"/>
    <property type="match status" value="1"/>
</dbReference>
<dbReference type="PROSITE" id="PS50110">
    <property type="entry name" value="RESPONSE_REGULATORY"/>
    <property type="match status" value="1"/>
</dbReference>
<proteinExistence type="inferred from homology"/>
<sequence>MSNNGIAAVVVDDSQFMRTVISDMLDDAGITVVATASNGESGVEAVRTHEPDVVTMDLKMPGMDGIEATGRIMDECPTPVLVLSAHADDGAELTFEAMDEGAVDFFKKPSGEVSVGIKQQQDELVEKVRSVAGADVSATEAAAERTTSTATSTTTSRSASEYVDKPTLVIGSSTGGPTVVEQLLSELPLDADLRILVVQHMPDGFTGRFAKRLDGASEYSVSEATGGERIGGGEALVAQGGYHLEVSGYGGGRLRVTLTEDEPVNNVRPAVDVTLQTAAEQVDGPLTAAILTGMGADGADGVESVSAAGGSVVAQDEETSAVFGMPQRAIETGVVDDVRPRNELADGVLDTIMRE</sequence>
<name>CHEB_NATPD</name>